<organism>
    <name type="scientific">Campylobacter curvus (strain 525.92)</name>
    <dbReference type="NCBI Taxonomy" id="360105"/>
    <lineage>
        <taxon>Bacteria</taxon>
        <taxon>Pseudomonadati</taxon>
        <taxon>Campylobacterota</taxon>
        <taxon>Epsilonproteobacteria</taxon>
        <taxon>Campylobacterales</taxon>
        <taxon>Campylobacteraceae</taxon>
        <taxon>Campylobacter</taxon>
    </lineage>
</organism>
<keyword id="KW-1185">Reference proteome</keyword>
<keyword id="KW-0687">Ribonucleoprotein</keyword>
<keyword id="KW-0689">Ribosomal protein</keyword>
<keyword id="KW-0694">RNA-binding</keyword>
<keyword id="KW-0699">rRNA-binding</keyword>
<keyword id="KW-0820">tRNA-binding</keyword>
<evidence type="ECO:0000255" key="1">
    <source>
        <dbReference type="HAMAP-Rule" id="MF_00480"/>
    </source>
</evidence>
<evidence type="ECO:0000305" key="2"/>
<protein>
    <recommendedName>
        <fullName evidence="1">Small ribosomal subunit protein uS7</fullName>
    </recommendedName>
    <alternativeName>
        <fullName evidence="2">30S ribosomal protein S7</fullName>
    </alternativeName>
</protein>
<dbReference type="EMBL" id="CP000767">
    <property type="protein sequence ID" value="EAU01246.1"/>
    <property type="molecule type" value="Genomic_DNA"/>
</dbReference>
<dbReference type="RefSeq" id="WP_009650489.1">
    <property type="nucleotide sequence ID" value="NC_009715.2"/>
</dbReference>
<dbReference type="SMR" id="A7GZJ5"/>
<dbReference type="STRING" id="360105.CCV52592_0187"/>
<dbReference type="GeneID" id="61002646"/>
<dbReference type="KEGG" id="ccv:CCV52592_0187"/>
<dbReference type="HOGENOM" id="CLU_072226_1_1_7"/>
<dbReference type="OrthoDB" id="9807653at2"/>
<dbReference type="Proteomes" id="UP000006380">
    <property type="component" value="Chromosome"/>
</dbReference>
<dbReference type="GO" id="GO:0015935">
    <property type="term" value="C:small ribosomal subunit"/>
    <property type="evidence" value="ECO:0007669"/>
    <property type="project" value="InterPro"/>
</dbReference>
<dbReference type="GO" id="GO:0019843">
    <property type="term" value="F:rRNA binding"/>
    <property type="evidence" value="ECO:0007669"/>
    <property type="project" value="UniProtKB-UniRule"/>
</dbReference>
<dbReference type="GO" id="GO:0003735">
    <property type="term" value="F:structural constituent of ribosome"/>
    <property type="evidence" value="ECO:0007669"/>
    <property type="project" value="InterPro"/>
</dbReference>
<dbReference type="GO" id="GO:0000049">
    <property type="term" value="F:tRNA binding"/>
    <property type="evidence" value="ECO:0007669"/>
    <property type="project" value="UniProtKB-UniRule"/>
</dbReference>
<dbReference type="GO" id="GO:0006412">
    <property type="term" value="P:translation"/>
    <property type="evidence" value="ECO:0007669"/>
    <property type="project" value="UniProtKB-UniRule"/>
</dbReference>
<dbReference type="CDD" id="cd14869">
    <property type="entry name" value="uS7_Bacteria"/>
    <property type="match status" value="1"/>
</dbReference>
<dbReference type="FunFam" id="1.10.455.10:FF:000001">
    <property type="entry name" value="30S ribosomal protein S7"/>
    <property type="match status" value="1"/>
</dbReference>
<dbReference type="Gene3D" id="1.10.455.10">
    <property type="entry name" value="Ribosomal protein S7 domain"/>
    <property type="match status" value="1"/>
</dbReference>
<dbReference type="HAMAP" id="MF_00480_B">
    <property type="entry name" value="Ribosomal_uS7_B"/>
    <property type="match status" value="1"/>
</dbReference>
<dbReference type="InterPro" id="IPR000235">
    <property type="entry name" value="Ribosomal_uS7"/>
</dbReference>
<dbReference type="InterPro" id="IPR005717">
    <property type="entry name" value="Ribosomal_uS7_bac/org-type"/>
</dbReference>
<dbReference type="InterPro" id="IPR020606">
    <property type="entry name" value="Ribosomal_uS7_CS"/>
</dbReference>
<dbReference type="InterPro" id="IPR023798">
    <property type="entry name" value="Ribosomal_uS7_dom"/>
</dbReference>
<dbReference type="InterPro" id="IPR036823">
    <property type="entry name" value="Ribosomal_uS7_dom_sf"/>
</dbReference>
<dbReference type="NCBIfam" id="TIGR01029">
    <property type="entry name" value="rpsG_bact"/>
    <property type="match status" value="1"/>
</dbReference>
<dbReference type="PANTHER" id="PTHR11205">
    <property type="entry name" value="RIBOSOMAL PROTEIN S7"/>
    <property type="match status" value="1"/>
</dbReference>
<dbReference type="Pfam" id="PF00177">
    <property type="entry name" value="Ribosomal_S7"/>
    <property type="match status" value="1"/>
</dbReference>
<dbReference type="PIRSF" id="PIRSF002122">
    <property type="entry name" value="RPS7p_RPS7a_RPS5e_RPS7o"/>
    <property type="match status" value="1"/>
</dbReference>
<dbReference type="SUPFAM" id="SSF47973">
    <property type="entry name" value="Ribosomal protein S7"/>
    <property type="match status" value="1"/>
</dbReference>
<dbReference type="PROSITE" id="PS00052">
    <property type="entry name" value="RIBOSOMAL_S7"/>
    <property type="match status" value="1"/>
</dbReference>
<name>RS7_CAMC5</name>
<proteinExistence type="inferred from homology"/>
<accession>A7GZJ5</accession>
<reference key="1">
    <citation type="submission" date="2007-07" db="EMBL/GenBank/DDBJ databases">
        <title>Genome sequence of Campylobacter curvus 525.92 isolated from human feces.</title>
        <authorList>
            <person name="Fouts D.E."/>
            <person name="Mongodin E.F."/>
            <person name="Puiu D."/>
            <person name="Sebastian Y."/>
            <person name="Miller W.G."/>
            <person name="Mandrell R.E."/>
            <person name="Lastovica A.J."/>
            <person name="Nelson K.E."/>
        </authorList>
    </citation>
    <scope>NUCLEOTIDE SEQUENCE [LARGE SCALE GENOMIC DNA]</scope>
    <source>
        <strain>525.92</strain>
    </source>
</reference>
<sequence>MRRRKAPVREVLPDPIYGNKVITKFINSLMYDGKKSVATEIMYGALKAIEKKGGDVKGIDVFNDAIENVKPILEVKSRRVGGATYQVPVEVRPVRQQALAIRWLITYARKRSERTMIDKLANELLDAANSKGASFKKKEDTYKMAEANKAFAHYRW</sequence>
<gene>
    <name evidence="1" type="primary">rpsG</name>
    <name type="ordered locus">Ccur92_13330</name>
    <name type="ORF">CCV52592_0187</name>
</gene>
<comment type="function">
    <text evidence="1">One of the primary rRNA binding proteins, it binds directly to 16S rRNA where it nucleates assembly of the head domain of the 30S subunit. Is located at the subunit interface close to the decoding center, probably blocks exit of the E-site tRNA.</text>
</comment>
<comment type="subunit">
    <text evidence="1">Part of the 30S ribosomal subunit. Contacts proteins S9 and S11.</text>
</comment>
<comment type="similarity">
    <text evidence="1">Belongs to the universal ribosomal protein uS7 family.</text>
</comment>
<feature type="chain" id="PRO_1000014166" description="Small ribosomal subunit protein uS7">
    <location>
        <begin position="1"/>
        <end position="156"/>
    </location>
</feature>